<evidence type="ECO:0000255" key="1">
    <source>
        <dbReference type="HAMAP-Rule" id="MF_01523"/>
    </source>
</evidence>
<dbReference type="EC" id="2.1.1.242" evidence="1"/>
<dbReference type="EMBL" id="CP001091">
    <property type="protein sequence ID" value="ACE62611.1"/>
    <property type="molecule type" value="Genomic_DNA"/>
</dbReference>
<dbReference type="RefSeq" id="WP_005618330.1">
    <property type="nucleotide sequence ID" value="NC_010939.1"/>
</dbReference>
<dbReference type="SMR" id="B3GZC5"/>
<dbReference type="KEGG" id="apa:APP7_1959"/>
<dbReference type="HOGENOM" id="CLU_076324_0_0_6"/>
<dbReference type="Proteomes" id="UP000001226">
    <property type="component" value="Chromosome"/>
</dbReference>
<dbReference type="GO" id="GO:0005737">
    <property type="term" value="C:cytoplasm"/>
    <property type="evidence" value="ECO:0007669"/>
    <property type="project" value="UniProtKB-SubCell"/>
</dbReference>
<dbReference type="GO" id="GO:0008990">
    <property type="term" value="F:rRNA (guanine-N2-)-methyltransferase activity"/>
    <property type="evidence" value="ECO:0007669"/>
    <property type="project" value="UniProtKB-UniRule"/>
</dbReference>
<dbReference type="CDD" id="cd02440">
    <property type="entry name" value="AdoMet_MTases"/>
    <property type="match status" value="1"/>
</dbReference>
<dbReference type="Gene3D" id="3.40.50.150">
    <property type="entry name" value="Vaccinia Virus protein VP39"/>
    <property type="match status" value="1"/>
</dbReference>
<dbReference type="Gene3D" id="3.40.1630.10">
    <property type="entry name" value="YhiQ-like domain"/>
    <property type="match status" value="1"/>
</dbReference>
<dbReference type="HAMAP" id="MF_01523">
    <property type="entry name" value="16SrRNA_methyltr_J"/>
    <property type="match status" value="1"/>
</dbReference>
<dbReference type="InterPro" id="IPR007536">
    <property type="entry name" value="16SrRNA_methylTrfase_J"/>
</dbReference>
<dbReference type="InterPro" id="IPR029063">
    <property type="entry name" value="SAM-dependent_MTases_sf"/>
</dbReference>
<dbReference type="PANTHER" id="PTHR36112">
    <property type="entry name" value="RIBOSOMAL RNA SMALL SUBUNIT METHYLTRANSFERASE J"/>
    <property type="match status" value="1"/>
</dbReference>
<dbReference type="PANTHER" id="PTHR36112:SF1">
    <property type="entry name" value="RIBOSOMAL RNA SMALL SUBUNIT METHYLTRANSFERASE J"/>
    <property type="match status" value="1"/>
</dbReference>
<dbReference type="Pfam" id="PF04445">
    <property type="entry name" value="SAM_MT"/>
    <property type="match status" value="1"/>
</dbReference>
<dbReference type="SUPFAM" id="SSF53335">
    <property type="entry name" value="S-adenosyl-L-methionine-dependent methyltransferases"/>
    <property type="match status" value="1"/>
</dbReference>
<reference key="1">
    <citation type="submission" date="2008-06" db="EMBL/GenBank/DDBJ databases">
        <title>Genome and proteome analysis of A. pleuropneumoniae serotype 7.</title>
        <authorList>
            <person name="Linke B."/>
            <person name="Buettner F."/>
            <person name="Martinez-Arias R."/>
            <person name="Goesmann A."/>
            <person name="Baltes N."/>
            <person name="Tegetmeyer H."/>
            <person name="Singh M."/>
            <person name="Gerlach G.F."/>
        </authorList>
    </citation>
    <scope>NUCLEOTIDE SEQUENCE [LARGE SCALE GENOMIC DNA]</scope>
    <source>
        <strain>AP76</strain>
    </source>
</reference>
<feature type="chain" id="PRO_0000383372" description="Ribosomal RNA small subunit methyltransferase J">
    <location>
        <begin position="1"/>
        <end position="251"/>
    </location>
</feature>
<feature type="binding site" evidence="1">
    <location>
        <begin position="100"/>
        <end position="101"/>
    </location>
    <ligand>
        <name>S-adenosyl-L-methionine</name>
        <dbReference type="ChEBI" id="CHEBI:59789"/>
    </ligand>
</feature>
<feature type="binding site" evidence="1">
    <location>
        <begin position="116"/>
        <end position="117"/>
    </location>
    <ligand>
        <name>S-adenosyl-L-methionine</name>
        <dbReference type="ChEBI" id="CHEBI:59789"/>
    </ligand>
</feature>
<feature type="binding site" evidence="1">
    <location>
        <position position="170"/>
    </location>
    <ligand>
        <name>S-adenosyl-L-methionine</name>
        <dbReference type="ChEBI" id="CHEBI:59789"/>
    </ligand>
</feature>
<organism>
    <name type="scientific">Actinobacillus pleuropneumoniae serotype 7 (strain AP76)</name>
    <dbReference type="NCBI Taxonomy" id="537457"/>
    <lineage>
        <taxon>Bacteria</taxon>
        <taxon>Pseudomonadati</taxon>
        <taxon>Pseudomonadota</taxon>
        <taxon>Gammaproteobacteria</taxon>
        <taxon>Pasteurellales</taxon>
        <taxon>Pasteurellaceae</taxon>
        <taxon>Actinobacillus</taxon>
    </lineage>
</organism>
<sequence>MTIQLINESSNTEKFQQICDKWRLVHDRSAILALVLTDERLELRKLDEPKLGAIAVNFVDGTMAHRRKFGGGRGEAVAKAVGIKGDYLPTIIDATAGLGRDAFVLASVGCKVLLVERNPIVAALLEDGLVRAYADPEIGAFMQERMILADVRNISLLDVAQQAADVVYLDPMYPHKQKSALVKKEMRVFQHLVGADLDSDNFFVPAKALARKRVVVKRPDYAPFLAEQKPDFSQTTKNHRFDVYLSHLKSA</sequence>
<name>RSMJ_ACTP7</name>
<keyword id="KW-0963">Cytoplasm</keyword>
<keyword id="KW-0489">Methyltransferase</keyword>
<keyword id="KW-0698">rRNA processing</keyword>
<keyword id="KW-0949">S-adenosyl-L-methionine</keyword>
<keyword id="KW-0808">Transferase</keyword>
<comment type="function">
    <text evidence="1">Specifically methylates the guanosine in position 1516 of 16S rRNA.</text>
</comment>
<comment type="catalytic activity">
    <reaction evidence="1">
        <text>guanosine(1516) in 16S rRNA + S-adenosyl-L-methionine = N(2)-methylguanosine(1516) in 16S rRNA + S-adenosyl-L-homocysteine + H(+)</text>
        <dbReference type="Rhea" id="RHEA:43220"/>
        <dbReference type="Rhea" id="RHEA-COMP:10412"/>
        <dbReference type="Rhea" id="RHEA-COMP:10413"/>
        <dbReference type="ChEBI" id="CHEBI:15378"/>
        <dbReference type="ChEBI" id="CHEBI:57856"/>
        <dbReference type="ChEBI" id="CHEBI:59789"/>
        <dbReference type="ChEBI" id="CHEBI:74269"/>
        <dbReference type="ChEBI" id="CHEBI:74481"/>
        <dbReference type="EC" id="2.1.1.242"/>
    </reaction>
</comment>
<comment type="subcellular location">
    <subcellularLocation>
        <location evidence="1">Cytoplasm</location>
    </subcellularLocation>
</comment>
<comment type="similarity">
    <text evidence="1">Belongs to the methyltransferase superfamily. RsmJ family.</text>
</comment>
<accession>B3GZC5</accession>
<gene>
    <name evidence="1" type="primary">rsmJ</name>
    <name type="ordered locus">APP7_1959</name>
</gene>
<proteinExistence type="inferred from homology"/>
<protein>
    <recommendedName>
        <fullName evidence="1">Ribosomal RNA small subunit methyltransferase J</fullName>
        <ecNumber evidence="1">2.1.1.242</ecNumber>
    </recommendedName>
    <alternativeName>
        <fullName evidence="1">16S rRNA m2G1516 methyltransferase</fullName>
    </alternativeName>
    <alternativeName>
        <fullName evidence="1">rRNA (guanine-N(2)-)-methyltransferase</fullName>
    </alternativeName>
</protein>